<gene>
    <name type="primary">vanRB</name>
    <name type="ordered locus">EF_2299</name>
</gene>
<comment type="function">
    <text evidence="3 4 5">Member of the two-component regulatory system VanSB/VanRB (PubMed:10463151, PubMed:8631706, PubMed:9751771). Activates the transcription of vanSB, vanYB and vanW in response to vancomycin which results in vancomycin resistance (PubMed:10463151, PubMed:8631706, PubMed:9751771).</text>
</comment>
<comment type="subcellular location">
    <subcellularLocation>
        <location evidence="6">Cytoplasm</location>
    </subcellularLocation>
</comment>
<comment type="PTM">
    <text evidence="3 4">May be phosphorylated by VanSB (PubMed:8631706). May also be dephosphorylated by VanSB (PubMed:10463151).</text>
</comment>
<evidence type="ECO:0000255" key="1">
    <source>
        <dbReference type="PROSITE-ProRule" id="PRU00169"/>
    </source>
</evidence>
<evidence type="ECO:0000255" key="2">
    <source>
        <dbReference type="PROSITE-ProRule" id="PRU01091"/>
    </source>
</evidence>
<evidence type="ECO:0000269" key="3">
    <source>
    </source>
</evidence>
<evidence type="ECO:0000269" key="4">
    <source>
    </source>
</evidence>
<evidence type="ECO:0000269" key="5">
    <source>
    </source>
</evidence>
<evidence type="ECO:0000305" key="6"/>
<proteinExistence type="evidence at protein level"/>
<sequence>MSIRILLVEDDDHICNTVRAFLAEARYEVDACTDGNEAHTKFYENTYQLVILDIMLPGMNGHELLREFRAQNDTPILMMTALSDDENQIRAFDAEADDYVTKPFKMRILLKRVEALLRRSGALAKEFRVGRLTLLPEDFRVLCDGTELPLTRKEFEILLLLVQNKGRTLTHEIILSRIWGYDFDGDGSTVHTHIKNLRAKLPENIIKTIRGVGYRLEESL</sequence>
<organism>
    <name type="scientific">Enterococcus faecalis (strain ATCC 700802 / V583)</name>
    <dbReference type="NCBI Taxonomy" id="226185"/>
    <lineage>
        <taxon>Bacteria</taxon>
        <taxon>Bacillati</taxon>
        <taxon>Bacillota</taxon>
        <taxon>Bacilli</taxon>
        <taxon>Lactobacillales</taxon>
        <taxon>Enterococcaceae</taxon>
        <taxon>Enterococcus</taxon>
    </lineage>
</organism>
<name>VANR_ENTFA</name>
<accession>Q47744</accession>
<feature type="chain" id="PRO_0000081262" description="Regulatory protein VanRB">
    <location>
        <begin position="1"/>
        <end position="220"/>
    </location>
</feature>
<feature type="domain" description="Response regulatory" evidence="1">
    <location>
        <begin position="4"/>
        <end position="117"/>
    </location>
</feature>
<feature type="DNA-binding region" description="OmpR/PhoB-type" evidence="2">
    <location>
        <begin position="124"/>
        <end position="218"/>
    </location>
</feature>
<feature type="modified residue" description="4-aspartylphosphate" evidence="1">
    <location>
        <position position="53"/>
    </location>
</feature>
<reference key="1">
    <citation type="journal article" date="1996" name="J. Bacteriol.">
        <title>Regulation of VanB-type vancomycin resistance gene expression by the VanS(B)-VanR(B) two-component regulatory system in Enterococcus faecalis V583.</title>
        <authorList>
            <person name="Evers S."/>
            <person name="Courvalin P."/>
        </authorList>
    </citation>
    <scope>NUCLEOTIDE SEQUENCE [GENOMIC DNA]</scope>
    <scope>FUNCTION</scope>
    <scope>PHOSPHORYLATION</scope>
    <source>
        <strain>ATCC 700802 / V583</strain>
    </source>
</reference>
<reference key="2">
    <citation type="journal article" date="2003" name="Science">
        <title>Role of mobile DNA in the evolution of vancomycin-resistant Enterococcus faecalis.</title>
        <authorList>
            <person name="Paulsen I.T."/>
            <person name="Banerjei L."/>
            <person name="Myers G.S.A."/>
            <person name="Nelson K.E."/>
            <person name="Seshadri R."/>
            <person name="Read T.D."/>
            <person name="Fouts D.E."/>
            <person name="Eisen J.A."/>
            <person name="Gill S.R."/>
            <person name="Heidelberg J.F."/>
            <person name="Tettelin H."/>
            <person name="Dodson R.J."/>
            <person name="Umayam L.A."/>
            <person name="Brinkac L.M."/>
            <person name="Beanan M.J."/>
            <person name="Daugherty S.C."/>
            <person name="DeBoy R.T."/>
            <person name="Durkin S.A."/>
            <person name="Kolonay J.F."/>
            <person name="Madupu R."/>
            <person name="Nelson W.C."/>
            <person name="Vamathevan J.J."/>
            <person name="Tran B."/>
            <person name="Upton J."/>
            <person name="Hansen T."/>
            <person name="Shetty J."/>
            <person name="Khouri H.M."/>
            <person name="Utterback T.R."/>
            <person name="Radune D."/>
            <person name="Ketchum K.A."/>
            <person name="Dougherty B.A."/>
            <person name="Fraser C.M."/>
        </authorList>
    </citation>
    <scope>NUCLEOTIDE SEQUENCE [LARGE SCALE GENOMIC DNA]</scope>
    <source>
        <strain>ATCC 700802 / V583</strain>
    </source>
</reference>
<reference key="3">
    <citation type="journal article" date="1998" name="Proc. Natl. Acad. Sci. U.S.A.">
        <title>In vivo characterization of the type A and B vancomycin-resistant enterococci (VRE) VanRS two-component systems in Escherichia coli: a nonpathogenic model for studying the VRE signal transduction pathways.</title>
        <authorList>
            <person name="Silva J.C."/>
            <person name="Haldimann A."/>
            <person name="Prahalad M.K."/>
            <person name="Walsh C.T."/>
            <person name="Wanner B.L."/>
        </authorList>
    </citation>
    <scope>FUNCTION</scope>
</reference>
<reference key="4">
    <citation type="journal article" date="1999" name="Microbiology">
        <title>Regulated interactions between partner and non-partner sensors and response regulators that control glycopeptide resistance gene expression in enterococci.</title>
        <authorList>
            <person name="Arthur M."/>
            <person name="Depardieu F."/>
            <person name="Courvalin P."/>
        </authorList>
    </citation>
    <scope>FUNCTION</scope>
    <scope>PHOSPHORYLATION</scope>
</reference>
<protein>
    <recommendedName>
        <fullName>Regulatory protein VanRB</fullName>
    </recommendedName>
</protein>
<keyword id="KW-0010">Activator</keyword>
<keyword id="KW-0046">Antibiotic resistance</keyword>
<keyword id="KW-0961">Cell wall biogenesis/degradation</keyword>
<keyword id="KW-0963">Cytoplasm</keyword>
<keyword id="KW-0238">DNA-binding</keyword>
<keyword id="KW-0597">Phosphoprotein</keyword>
<keyword id="KW-1185">Reference proteome</keyword>
<keyword id="KW-0678">Repressor</keyword>
<keyword id="KW-0804">Transcription</keyword>
<keyword id="KW-0805">Transcription regulation</keyword>
<keyword id="KW-0902">Two-component regulatory system</keyword>
<dbReference type="EMBL" id="U35369">
    <property type="protein sequence ID" value="AAB05622.1"/>
    <property type="molecule type" value="Genomic_DNA"/>
</dbReference>
<dbReference type="EMBL" id="AE016830">
    <property type="protein sequence ID" value="AAO82026.1"/>
    <property type="molecule type" value="Genomic_DNA"/>
</dbReference>
<dbReference type="RefSeq" id="NP_815956.1">
    <property type="nucleotide sequence ID" value="NC_004668.1"/>
</dbReference>
<dbReference type="SMR" id="Q47744"/>
<dbReference type="STRING" id="226185.EF_2299"/>
<dbReference type="CARD" id="ARO:3002921">
    <property type="molecule name" value="vanR_in_vanB_cl"/>
    <property type="mechanism identifier" value="ARO:0001001"/>
    <property type="mechanism name" value="antibiotic target alteration"/>
</dbReference>
<dbReference type="EnsemblBacteria" id="AAO82026">
    <property type="protein sequence ID" value="AAO82026"/>
    <property type="gene ID" value="EF_2299"/>
</dbReference>
<dbReference type="KEGG" id="efa:EF2299"/>
<dbReference type="PATRIC" id="fig|226185.45.peg.1233"/>
<dbReference type="eggNOG" id="COG0745">
    <property type="taxonomic scope" value="Bacteria"/>
</dbReference>
<dbReference type="HOGENOM" id="CLU_000445_30_3_9"/>
<dbReference type="Proteomes" id="UP000001415">
    <property type="component" value="Chromosome"/>
</dbReference>
<dbReference type="GO" id="GO:0005829">
    <property type="term" value="C:cytosol"/>
    <property type="evidence" value="ECO:0007669"/>
    <property type="project" value="TreeGrafter"/>
</dbReference>
<dbReference type="GO" id="GO:0032993">
    <property type="term" value="C:protein-DNA complex"/>
    <property type="evidence" value="ECO:0007669"/>
    <property type="project" value="TreeGrafter"/>
</dbReference>
<dbReference type="GO" id="GO:0000156">
    <property type="term" value="F:phosphorelay response regulator activity"/>
    <property type="evidence" value="ECO:0007669"/>
    <property type="project" value="TreeGrafter"/>
</dbReference>
<dbReference type="GO" id="GO:0000976">
    <property type="term" value="F:transcription cis-regulatory region binding"/>
    <property type="evidence" value="ECO:0007669"/>
    <property type="project" value="TreeGrafter"/>
</dbReference>
<dbReference type="GO" id="GO:0071555">
    <property type="term" value="P:cell wall organization"/>
    <property type="evidence" value="ECO:0007669"/>
    <property type="project" value="UniProtKB-KW"/>
</dbReference>
<dbReference type="GO" id="GO:0006355">
    <property type="term" value="P:regulation of DNA-templated transcription"/>
    <property type="evidence" value="ECO:0007669"/>
    <property type="project" value="InterPro"/>
</dbReference>
<dbReference type="GO" id="GO:0046677">
    <property type="term" value="P:response to antibiotic"/>
    <property type="evidence" value="ECO:0007669"/>
    <property type="project" value="UniProtKB-KW"/>
</dbReference>
<dbReference type="CDD" id="cd17574">
    <property type="entry name" value="REC_OmpR"/>
    <property type="match status" value="1"/>
</dbReference>
<dbReference type="CDD" id="cd00383">
    <property type="entry name" value="trans_reg_C"/>
    <property type="match status" value="1"/>
</dbReference>
<dbReference type="FunFam" id="3.40.50.2300:FF:000001">
    <property type="entry name" value="DNA-binding response regulator PhoB"/>
    <property type="match status" value="1"/>
</dbReference>
<dbReference type="Gene3D" id="3.40.50.2300">
    <property type="match status" value="1"/>
</dbReference>
<dbReference type="Gene3D" id="6.10.250.690">
    <property type="match status" value="1"/>
</dbReference>
<dbReference type="Gene3D" id="1.10.10.10">
    <property type="entry name" value="Winged helix-like DNA-binding domain superfamily/Winged helix DNA-binding domain"/>
    <property type="match status" value="1"/>
</dbReference>
<dbReference type="InterPro" id="IPR011006">
    <property type="entry name" value="CheY-like_superfamily"/>
</dbReference>
<dbReference type="InterPro" id="IPR001867">
    <property type="entry name" value="OmpR/PhoB-type_DNA-bd"/>
</dbReference>
<dbReference type="InterPro" id="IPR001789">
    <property type="entry name" value="Sig_transdc_resp-reg_receiver"/>
</dbReference>
<dbReference type="InterPro" id="IPR039420">
    <property type="entry name" value="WalR-like"/>
</dbReference>
<dbReference type="InterPro" id="IPR036388">
    <property type="entry name" value="WH-like_DNA-bd_sf"/>
</dbReference>
<dbReference type="NCBIfam" id="NF000402">
    <property type="entry name" value="vanR-B"/>
    <property type="match status" value="1"/>
</dbReference>
<dbReference type="PANTHER" id="PTHR48111">
    <property type="entry name" value="REGULATOR OF RPOS"/>
    <property type="match status" value="1"/>
</dbReference>
<dbReference type="PANTHER" id="PTHR48111:SF32">
    <property type="entry name" value="STAGE 0 SPORULATION PROTEIN A HOMOLOG"/>
    <property type="match status" value="1"/>
</dbReference>
<dbReference type="Pfam" id="PF00072">
    <property type="entry name" value="Response_reg"/>
    <property type="match status" value="1"/>
</dbReference>
<dbReference type="Pfam" id="PF00486">
    <property type="entry name" value="Trans_reg_C"/>
    <property type="match status" value="1"/>
</dbReference>
<dbReference type="SMART" id="SM00448">
    <property type="entry name" value="REC"/>
    <property type="match status" value="1"/>
</dbReference>
<dbReference type="SMART" id="SM00862">
    <property type="entry name" value="Trans_reg_C"/>
    <property type="match status" value="1"/>
</dbReference>
<dbReference type="SUPFAM" id="SSF52172">
    <property type="entry name" value="CheY-like"/>
    <property type="match status" value="1"/>
</dbReference>
<dbReference type="PROSITE" id="PS51755">
    <property type="entry name" value="OMPR_PHOB"/>
    <property type="match status" value="1"/>
</dbReference>
<dbReference type="PROSITE" id="PS50110">
    <property type="entry name" value="RESPONSE_REGULATORY"/>
    <property type="match status" value="1"/>
</dbReference>